<comment type="function">
    <text evidence="1">Catalyzes the methylthiolation of an aspartic acid residue of ribosomal protein uS12.</text>
</comment>
<comment type="catalytic activity">
    <reaction evidence="1">
        <text>L-aspartate(89)-[ribosomal protein uS12]-hydrogen + (sulfur carrier)-SH + AH2 + 2 S-adenosyl-L-methionine = 3-methylsulfanyl-L-aspartate(89)-[ribosomal protein uS12]-hydrogen + (sulfur carrier)-H + 5'-deoxyadenosine + L-methionine + A + S-adenosyl-L-homocysteine + 2 H(+)</text>
        <dbReference type="Rhea" id="RHEA:37087"/>
        <dbReference type="Rhea" id="RHEA-COMP:10460"/>
        <dbReference type="Rhea" id="RHEA-COMP:10461"/>
        <dbReference type="Rhea" id="RHEA-COMP:14737"/>
        <dbReference type="Rhea" id="RHEA-COMP:14739"/>
        <dbReference type="ChEBI" id="CHEBI:13193"/>
        <dbReference type="ChEBI" id="CHEBI:15378"/>
        <dbReference type="ChEBI" id="CHEBI:17319"/>
        <dbReference type="ChEBI" id="CHEBI:17499"/>
        <dbReference type="ChEBI" id="CHEBI:29917"/>
        <dbReference type="ChEBI" id="CHEBI:29961"/>
        <dbReference type="ChEBI" id="CHEBI:57844"/>
        <dbReference type="ChEBI" id="CHEBI:57856"/>
        <dbReference type="ChEBI" id="CHEBI:59789"/>
        <dbReference type="ChEBI" id="CHEBI:64428"/>
        <dbReference type="ChEBI" id="CHEBI:73599"/>
        <dbReference type="EC" id="2.8.4.4"/>
    </reaction>
</comment>
<comment type="cofactor">
    <cofactor evidence="1">
        <name>[4Fe-4S] cluster</name>
        <dbReference type="ChEBI" id="CHEBI:49883"/>
    </cofactor>
    <text evidence="1">Binds 2 [4Fe-4S] clusters. One cluster is coordinated with 3 cysteines and an exchangeable S-adenosyl-L-methionine.</text>
</comment>
<comment type="subcellular location">
    <subcellularLocation>
        <location evidence="1">Cytoplasm</location>
    </subcellularLocation>
</comment>
<comment type="similarity">
    <text evidence="1">Belongs to the methylthiotransferase family. RimO subfamily.</text>
</comment>
<feature type="chain" id="PRO_0000374974" description="Ribosomal protein uS12 methylthiotransferase RimO">
    <location>
        <begin position="1"/>
        <end position="441"/>
    </location>
</feature>
<feature type="domain" description="MTTase N-terminal" evidence="1">
    <location>
        <begin position="7"/>
        <end position="117"/>
    </location>
</feature>
<feature type="domain" description="Radical SAM core" evidence="2">
    <location>
        <begin position="134"/>
        <end position="371"/>
    </location>
</feature>
<feature type="domain" description="TRAM" evidence="1">
    <location>
        <begin position="374"/>
        <end position="440"/>
    </location>
</feature>
<feature type="binding site" evidence="1">
    <location>
        <position position="16"/>
    </location>
    <ligand>
        <name>[4Fe-4S] cluster</name>
        <dbReference type="ChEBI" id="CHEBI:49883"/>
        <label>1</label>
    </ligand>
</feature>
<feature type="binding site" evidence="1">
    <location>
        <position position="52"/>
    </location>
    <ligand>
        <name>[4Fe-4S] cluster</name>
        <dbReference type="ChEBI" id="CHEBI:49883"/>
        <label>1</label>
    </ligand>
</feature>
<feature type="binding site" evidence="1">
    <location>
        <position position="81"/>
    </location>
    <ligand>
        <name>[4Fe-4S] cluster</name>
        <dbReference type="ChEBI" id="CHEBI:49883"/>
        <label>1</label>
    </ligand>
</feature>
<feature type="binding site" evidence="1">
    <location>
        <position position="148"/>
    </location>
    <ligand>
        <name>[4Fe-4S] cluster</name>
        <dbReference type="ChEBI" id="CHEBI:49883"/>
        <label>2</label>
        <note>4Fe-4S-S-AdoMet</note>
    </ligand>
</feature>
<feature type="binding site" evidence="1">
    <location>
        <position position="152"/>
    </location>
    <ligand>
        <name>[4Fe-4S] cluster</name>
        <dbReference type="ChEBI" id="CHEBI:49883"/>
        <label>2</label>
        <note>4Fe-4S-S-AdoMet</note>
    </ligand>
</feature>
<feature type="binding site" evidence="1">
    <location>
        <position position="155"/>
    </location>
    <ligand>
        <name>[4Fe-4S] cluster</name>
        <dbReference type="ChEBI" id="CHEBI:49883"/>
        <label>2</label>
        <note>4Fe-4S-S-AdoMet</note>
    </ligand>
</feature>
<accession>Q2IW68</accession>
<gene>
    <name evidence="1" type="primary">rimO</name>
    <name type="ordered locus">RPB_2840</name>
</gene>
<dbReference type="EC" id="2.8.4.4" evidence="1"/>
<dbReference type="EMBL" id="CP000250">
    <property type="protein sequence ID" value="ABD07542.1"/>
    <property type="molecule type" value="Genomic_DNA"/>
</dbReference>
<dbReference type="RefSeq" id="WP_011441727.1">
    <property type="nucleotide sequence ID" value="NC_007778.1"/>
</dbReference>
<dbReference type="SMR" id="Q2IW68"/>
<dbReference type="STRING" id="316058.RPB_2840"/>
<dbReference type="KEGG" id="rpb:RPB_2840"/>
<dbReference type="eggNOG" id="COG0621">
    <property type="taxonomic scope" value="Bacteria"/>
</dbReference>
<dbReference type="HOGENOM" id="CLU_018697_0_0_5"/>
<dbReference type="OrthoDB" id="9805215at2"/>
<dbReference type="Proteomes" id="UP000008809">
    <property type="component" value="Chromosome"/>
</dbReference>
<dbReference type="GO" id="GO:0005829">
    <property type="term" value="C:cytosol"/>
    <property type="evidence" value="ECO:0007669"/>
    <property type="project" value="TreeGrafter"/>
</dbReference>
<dbReference type="GO" id="GO:0051539">
    <property type="term" value="F:4 iron, 4 sulfur cluster binding"/>
    <property type="evidence" value="ECO:0007669"/>
    <property type="project" value="UniProtKB-UniRule"/>
</dbReference>
<dbReference type="GO" id="GO:0035599">
    <property type="term" value="F:aspartic acid methylthiotransferase activity"/>
    <property type="evidence" value="ECO:0007669"/>
    <property type="project" value="TreeGrafter"/>
</dbReference>
<dbReference type="GO" id="GO:0046872">
    <property type="term" value="F:metal ion binding"/>
    <property type="evidence" value="ECO:0007669"/>
    <property type="project" value="UniProtKB-KW"/>
</dbReference>
<dbReference type="GO" id="GO:0103039">
    <property type="term" value="F:protein methylthiotransferase activity"/>
    <property type="evidence" value="ECO:0007669"/>
    <property type="project" value="UniProtKB-EC"/>
</dbReference>
<dbReference type="GO" id="GO:0006400">
    <property type="term" value="P:tRNA modification"/>
    <property type="evidence" value="ECO:0007669"/>
    <property type="project" value="InterPro"/>
</dbReference>
<dbReference type="CDD" id="cd01335">
    <property type="entry name" value="Radical_SAM"/>
    <property type="match status" value="1"/>
</dbReference>
<dbReference type="FunFam" id="2.40.50.140:FF:000060">
    <property type="entry name" value="Ribosomal protein S12 methylthiotransferase RimO"/>
    <property type="match status" value="1"/>
</dbReference>
<dbReference type="FunFam" id="3.40.50.12160:FF:000002">
    <property type="entry name" value="Ribosomal protein S12 methylthiotransferase RimO"/>
    <property type="match status" value="1"/>
</dbReference>
<dbReference type="FunFam" id="3.80.30.20:FF:000001">
    <property type="entry name" value="tRNA-2-methylthio-N(6)-dimethylallyladenosine synthase 2"/>
    <property type="match status" value="1"/>
</dbReference>
<dbReference type="Gene3D" id="3.40.50.12160">
    <property type="entry name" value="Methylthiotransferase, N-terminal domain"/>
    <property type="match status" value="1"/>
</dbReference>
<dbReference type="Gene3D" id="2.40.50.140">
    <property type="entry name" value="Nucleic acid-binding proteins"/>
    <property type="match status" value="1"/>
</dbReference>
<dbReference type="Gene3D" id="3.80.30.20">
    <property type="entry name" value="tm_1862 like domain"/>
    <property type="match status" value="1"/>
</dbReference>
<dbReference type="HAMAP" id="MF_01865">
    <property type="entry name" value="MTTase_RimO"/>
    <property type="match status" value="1"/>
</dbReference>
<dbReference type="InterPro" id="IPR006638">
    <property type="entry name" value="Elp3/MiaA/NifB-like_rSAM"/>
</dbReference>
<dbReference type="InterPro" id="IPR005839">
    <property type="entry name" value="Methylthiotransferase"/>
</dbReference>
<dbReference type="InterPro" id="IPR020612">
    <property type="entry name" value="Methylthiotransferase_CS"/>
</dbReference>
<dbReference type="InterPro" id="IPR013848">
    <property type="entry name" value="Methylthiotransferase_N"/>
</dbReference>
<dbReference type="InterPro" id="IPR038135">
    <property type="entry name" value="Methylthiotransferase_N_sf"/>
</dbReference>
<dbReference type="InterPro" id="IPR012340">
    <property type="entry name" value="NA-bd_OB-fold"/>
</dbReference>
<dbReference type="InterPro" id="IPR005840">
    <property type="entry name" value="Ribosomal_uS12_MeSTrfase_RimO"/>
</dbReference>
<dbReference type="InterPro" id="IPR007197">
    <property type="entry name" value="rSAM"/>
</dbReference>
<dbReference type="InterPro" id="IPR023404">
    <property type="entry name" value="rSAM_horseshoe"/>
</dbReference>
<dbReference type="InterPro" id="IPR002792">
    <property type="entry name" value="TRAM_dom"/>
</dbReference>
<dbReference type="NCBIfam" id="TIGR01125">
    <property type="entry name" value="30S ribosomal protein S12 methylthiotransferase RimO"/>
    <property type="match status" value="1"/>
</dbReference>
<dbReference type="NCBIfam" id="TIGR00089">
    <property type="entry name" value="MiaB/RimO family radical SAM methylthiotransferase"/>
    <property type="match status" value="1"/>
</dbReference>
<dbReference type="PANTHER" id="PTHR43837">
    <property type="entry name" value="RIBOSOMAL PROTEIN S12 METHYLTHIOTRANSFERASE RIMO"/>
    <property type="match status" value="1"/>
</dbReference>
<dbReference type="PANTHER" id="PTHR43837:SF1">
    <property type="entry name" value="RIBOSOMAL PROTEIN US12 METHYLTHIOTRANSFERASE RIMO"/>
    <property type="match status" value="1"/>
</dbReference>
<dbReference type="Pfam" id="PF04055">
    <property type="entry name" value="Radical_SAM"/>
    <property type="match status" value="1"/>
</dbReference>
<dbReference type="Pfam" id="PF18693">
    <property type="entry name" value="TRAM_2"/>
    <property type="match status" value="1"/>
</dbReference>
<dbReference type="Pfam" id="PF00919">
    <property type="entry name" value="UPF0004"/>
    <property type="match status" value="1"/>
</dbReference>
<dbReference type="SFLD" id="SFLDG01082">
    <property type="entry name" value="B12-binding_domain_containing"/>
    <property type="match status" value="1"/>
</dbReference>
<dbReference type="SFLD" id="SFLDG01061">
    <property type="entry name" value="methylthiotransferase"/>
    <property type="match status" value="1"/>
</dbReference>
<dbReference type="SFLD" id="SFLDF00274">
    <property type="entry name" value="ribosomal_protein_S12_methylth"/>
    <property type="match status" value="1"/>
</dbReference>
<dbReference type="SMART" id="SM00729">
    <property type="entry name" value="Elp3"/>
    <property type="match status" value="1"/>
</dbReference>
<dbReference type="SUPFAM" id="SSF102114">
    <property type="entry name" value="Radical SAM enzymes"/>
    <property type="match status" value="1"/>
</dbReference>
<dbReference type="PROSITE" id="PS51449">
    <property type="entry name" value="MTTASE_N"/>
    <property type="match status" value="1"/>
</dbReference>
<dbReference type="PROSITE" id="PS01278">
    <property type="entry name" value="MTTASE_RADICAL"/>
    <property type="match status" value="1"/>
</dbReference>
<dbReference type="PROSITE" id="PS51918">
    <property type="entry name" value="RADICAL_SAM"/>
    <property type="match status" value="1"/>
</dbReference>
<dbReference type="PROSITE" id="PS50926">
    <property type="entry name" value="TRAM"/>
    <property type="match status" value="1"/>
</dbReference>
<name>RIMO_RHOP2</name>
<evidence type="ECO:0000255" key="1">
    <source>
        <dbReference type="HAMAP-Rule" id="MF_01865"/>
    </source>
</evidence>
<evidence type="ECO:0000255" key="2">
    <source>
        <dbReference type="PROSITE-ProRule" id="PRU01266"/>
    </source>
</evidence>
<sequence length="441" mass="48789">MQQAAAPKISFVSLGCPKALVDSERIITRLRAEGYELARQHDGADLVIVNTCGFLDSAKQESLAAIGEAMAANGKVIVTGCMGAEPEQIEAAYPGVLSITGPQQYESVLDAVHRAKPALHNPHLDLVPEQGIRLTPRHYAYLKISEGCNNRCSFCIIPKLRGDLASRSAADVLREAEKLVAAGVKELLVISQDTSAYGVDLKYAESPWKDRSVRAKFIDLARELGELGAWVRLHYVYPYPHVDEVIGLMTEGKVLPYLDIPFQHASPDVLKLMKRPAAQDKTLERIKRWRAQCPDLALRSTFIVGFPGETERDFEFLLDWLDEAEIDRLGAFKYEPVAGAPSNALEGQVPDEVKQERWNRLMARQQAISARRLKRKVGTRQQIIIDEIGPTVAKGRSKADAPEIDGSVYLTSRRPLRVGEIVTAKIDRADAYDLHGTVAGF</sequence>
<protein>
    <recommendedName>
        <fullName evidence="1">Ribosomal protein uS12 methylthiotransferase RimO</fullName>
        <shortName evidence="1">uS12 MTTase</shortName>
        <shortName evidence="1">uS12 methylthiotransferase</shortName>
        <ecNumber evidence="1">2.8.4.4</ecNumber>
    </recommendedName>
    <alternativeName>
        <fullName evidence="1">Ribosomal protein uS12 (aspartate-C(3))-methylthiotransferase</fullName>
    </alternativeName>
    <alternativeName>
        <fullName evidence="1">Ribosome maturation factor RimO</fullName>
    </alternativeName>
</protein>
<proteinExistence type="inferred from homology"/>
<reference key="1">
    <citation type="submission" date="2006-01" db="EMBL/GenBank/DDBJ databases">
        <title>Complete sequence of Rhodopseudomonas palustris HaA2.</title>
        <authorList>
            <consortium name="US DOE Joint Genome Institute"/>
            <person name="Copeland A."/>
            <person name="Lucas S."/>
            <person name="Lapidus A."/>
            <person name="Barry K."/>
            <person name="Detter J.C."/>
            <person name="Glavina T."/>
            <person name="Hammon N."/>
            <person name="Israni S."/>
            <person name="Pitluck S."/>
            <person name="Chain P."/>
            <person name="Malfatti S."/>
            <person name="Shin M."/>
            <person name="Vergez L."/>
            <person name="Schmutz J."/>
            <person name="Larimer F."/>
            <person name="Land M."/>
            <person name="Hauser L."/>
            <person name="Pelletier D.A."/>
            <person name="Kyrpides N."/>
            <person name="Anderson I."/>
            <person name="Oda Y."/>
            <person name="Harwood C.S."/>
            <person name="Richardson P."/>
        </authorList>
    </citation>
    <scope>NUCLEOTIDE SEQUENCE [LARGE SCALE GENOMIC DNA]</scope>
    <source>
        <strain>HaA2</strain>
    </source>
</reference>
<keyword id="KW-0004">4Fe-4S</keyword>
<keyword id="KW-0963">Cytoplasm</keyword>
<keyword id="KW-0408">Iron</keyword>
<keyword id="KW-0411">Iron-sulfur</keyword>
<keyword id="KW-0479">Metal-binding</keyword>
<keyword id="KW-1185">Reference proteome</keyword>
<keyword id="KW-0949">S-adenosyl-L-methionine</keyword>
<keyword id="KW-0808">Transferase</keyword>
<organism>
    <name type="scientific">Rhodopseudomonas palustris (strain HaA2)</name>
    <dbReference type="NCBI Taxonomy" id="316058"/>
    <lineage>
        <taxon>Bacteria</taxon>
        <taxon>Pseudomonadati</taxon>
        <taxon>Pseudomonadota</taxon>
        <taxon>Alphaproteobacteria</taxon>
        <taxon>Hyphomicrobiales</taxon>
        <taxon>Nitrobacteraceae</taxon>
        <taxon>Rhodopseudomonas</taxon>
    </lineage>
</organism>